<keyword id="KW-0929">Antimicrobial</keyword>
<keyword id="KW-1015">Disulfide bond</keyword>
<keyword id="KW-0295">Fungicide</keyword>
<keyword id="KW-0611">Plant defense</keyword>
<keyword id="KW-1185">Reference proteome</keyword>
<keyword id="KW-0964">Secreted</keyword>
<keyword id="KW-0732">Signal</keyword>
<proteinExistence type="evidence at transcript level"/>
<comment type="subcellular location">
    <subcellularLocation>
        <location evidence="1">Secreted</location>
    </subcellularLocation>
</comment>
<comment type="similarity">
    <text evidence="3">Belongs to the DEFL family.</text>
</comment>
<comment type="caution">
    <text evidence="3">Lacks 1 of the 4 disulfide bonds, which are conserved features of the family.</text>
</comment>
<sequence length="92" mass="10435">MASRATSLFIFFFLISCTFMLLETNASKNKSRSDLPLCGFREHCDGLWCPGEGGKYSCINWSCNFIEDCEKRIRCEKTGPCCFDGLCDCTNF</sequence>
<reference key="1">
    <citation type="journal article" date="1999" name="Nature">
        <title>Sequence and analysis of chromosome 2 of the plant Arabidopsis thaliana.</title>
        <authorList>
            <person name="Lin X."/>
            <person name="Kaul S."/>
            <person name="Rounsley S.D."/>
            <person name="Shea T.P."/>
            <person name="Benito M.-I."/>
            <person name="Town C.D."/>
            <person name="Fujii C.Y."/>
            <person name="Mason T.M."/>
            <person name="Bowman C.L."/>
            <person name="Barnstead M.E."/>
            <person name="Feldblyum T.V."/>
            <person name="Buell C.R."/>
            <person name="Ketchum K.A."/>
            <person name="Lee J.J."/>
            <person name="Ronning C.M."/>
            <person name="Koo H.L."/>
            <person name="Moffat K.S."/>
            <person name="Cronin L.A."/>
            <person name="Shen M."/>
            <person name="Pai G."/>
            <person name="Van Aken S."/>
            <person name="Umayam L."/>
            <person name="Tallon L.J."/>
            <person name="Gill J.E."/>
            <person name="Adams M.D."/>
            <person name="Carrera A.J."/>
            <person name="Creasy T.H."/>
            <person name="Goodman H.M."/>
            <person name="Somerville C.R."/>
            <person name="Copenhaver G.P."/>
            <person name="Preuss D."/>
            <person name="Nierman W.C."/>
            <person name="White O."/>
            <person name="Eisen J.A."/>
            <person name="Salzberg S.L."/>
            <person name="Fraser C.M."/>
            <person name="Venter J.C."/>
        </authorList>
    </citation>
    <scope>NUCLEOTIDE SEQUENCE [LARGE SCALE GENOMIC DNA]</scope>
    <source>
        <strain>cv. Columbia</strain>
    </source>
</reference>
<reference key="2">
    <citation type="journal article" date="2017" name="Plant J.">
        <title>Araport11: a complete reannotation of the Arabidopsis thaliana reference genome.</title>
        <authorList>
            <person name="Cheng C.Y."/>
            <person name="Krishnakumar V."/>
            <person name="Chan A.P."/>
            <person name="Thibaud-Nissen F."/>
            <person name="Schobel S."/>
            <person name="Town C.D."/>
        </authorList>
    </citation>
    <scope>GENOME REANNOTATION</scope>
    <source>
        <strain>cv. Columbia</strain>
    </source>
</reference>
<reference key="3">
    <citation type="journal article" date="2005" name="Plant Physiol.">
        <title>Genome organization of more than 300 defensin-like genes in Arabidopsis.</title>
        <authorList>
            <person name="Silverstein K.A.T."/>
            <person name="Graham M.A."/>
            <person name="Paape T.D."/>
            <person name="VandenBosch K.A."/>
        </authorList>
    </citation>
    <scope>GENE FAMILY</scope>
</reference>
<accession>Q2V4A4</accession>
<protein>
    <recommendedName>
        <fullName>Defensin-like protein 294</fullName>
    </recommendedName>
</protein>
<name>DF294_ARATH</name>
<evidence type="ECO:0000250" key="1"/>
<evidence type="ECO:0000255" key="2"/>
<evidence type="ECO:0000305" key="3"/>
<feature type="signal peptide" evidence="2">
    <location>
        <begin position="1"/>
        <end position="26"/>
    </location>
</feature>
<feature type="chain" id="PRO_0000379754" description="Defensin-like protein 294">
    <location>
        <begin position="27"/>
        <end position="92"/>
    </location>
</feature>
<feature type="disulfide bond" evidence="1">
    <location>
        <begin position="63"/>
        <end position="82"/>
    </location>
</feature>
<feature type="disulfide bond" evidence="1">
    <location>
        <begin position="69"/>
        <end position="87"/>
    </location>
</feature>
<feature type="disulfide bond" evidence="1">
    <location>
        <begin position="75"/>
        <end position="89"/>
    </location>
</feature>
<dbReference type="EMBL" id="AC007178">
    <property type="status" value="NOT_ANNOTATED_CDS"/>
    <property type="molecule type" value="Genomic_DNA"/>
</dbReference>
<dbReference type="EMBL" id="CP002685">
    <property type="protein sequence ID" value="AEC05781.1"/>
    <property type="molecule type" value="Genomic_DNA"/>
</dbReference>
<dbReference type="RefSeq" id="NP_001031315.1">
    <property type="nucleotide sequence ID" value="NM_001036238.2"/>
</dbReference>
<dbReference type="PaxDb" id="3702-AT2G04034.1"/>
<dbReference type="ProteomicsDB" id="224574"/>
<dbReference type="EnsemblPlants" id="AT2G04034.1">
    <property type="protein sequence ID" value="AT2G04034.1"/>
    <property type="gene ID" value="AT2G04034"/>
</dbReference>
<dbReference type="GeneID" id="3768059"/>
<dbReference type="Gramene" id="AT2G04034.1">
    <property type="protein sequence ID" value="AT2G04034.1"/>
    <property type="gene ID" value="AT2G04034"/>
</dbReference>
<dbReference type="KEGG" id="ath:AT2G04034"/>
<dbReference type="Araport" id="AT2G04034"/>
<dbReference type="TAIR" id="AT2G04034"/>
<dbReference type="HOGENOM" id="CLU_2416386_0_0_1"/>
<dbReference type="InParanoid" id="Q2V4A4"/>
<dbReference type="OMA" id="CEKRIRC"/>
<dbReference type="PhylomeDB" id="Q2V4A4"/>
<dbReference type="PRO" id="PR:Q2V4A4"/>
<dbReference type="Proteomes" id="UP000006548">
    <property type="component" value="Chromosome 2"/>
</dbReference>
<dbReference type="ExpressionAtlas" id="Q2V4A4">
    <property type="expression patterns" value="baseline"/>
</dbReference>
<dbReference type="GO" id="GO:0005576">
    <property type="term" value="C:extracellular region"/>
    <property type="evidence" value="ECO:0007669"/>
    <property type="project" value="UniProtKB-SubCell"/>
</dbReference>
<dbReference type="GO" id="GO:0050832">
    <property type="term" value="P:defense response to fungus"/>
    <property type="evidence" value="ECO:0007669"/>
    <property type="project" value="UniProtKB-KW"/>
</dbReference>
<dbReference type="GO" id="GO:0031640">
    <property type="term" value="P:killing of cells of another organism"/>
    <property type="evidence" value="ECO:0007669"/>
    <property type="project" value="UniProtKB-KW"/>
</dbReference>
<gene>
    <name type="ordered locus">At2g04034</name>
    <name type="ORF">F3L12</name>
</gene>
<organism>
    <name type="scientific">Arabidopsis thaliana</name>
    <name type="common">Mouse-ear cress</name>
    <dbReference type="NCBI Taxonomy" id="3702"/>
    <lineage>
        <taxon>Eukaryota</taxon>
        <taxon>Viridiplantae</taxon>
        <taxon>Streptophyta</taxon>
        <taxon>Embryophyta</taxon>
        <taxon>Tracheophyta</taxon>
        <taxon>Spermatophyta</taxon>
        <taxon>Magnoliopsida</taxon>
        <taxon>eudicotyledons</taxon>
        <taxon>Gunneridae</taxon>
        <taxon>Pentapetalae</taxon>
        <taxon>rosids</taxon>
        <taxon>malvids</taxon>
        <taxon>Brassicales</taxon>
        <taxon>Brassicaceae</taxon>
        <taxon>Camelineae</taxon>
        <taxon>Arabidopsis</taxon>
    </lineage>
</organism>